<name>RIR1_FRG3G</name>
<keyword id="KW-0215">Deoxyribonucleotide synthesis</keyword>
<keyword id="KW-1015">Disulfide bond</keyword>
<keyword id="KW-0560">Oxidoreductase</keyword>
<keyword id="KW-1185">Reference proteome</keyword>
<organism>
    <name type="scientific">Frog virus 3 (isolate Goorha)</name>
    <name type="common">FV-3</name>
    <dbReference type="NCBI Taxonomy" id="654924"/>
    <lineage>
        <taxon>Viruses</taxon>
        <taxon>Varidnaviria</taxon>
        <taxon>Bamfordvirae</taxon>
        <taxon>Nucleocytoviricota</taxon>
        <taxon>Megaviricetes</taxon>
        <taxon>Pimascovirales</taxon>
        <taxon>Iridoviridae</taxon>
        <taxon>Alphairidovirinae</taxon>
        <taxon>Ranavirus</taxon>
        <taxon>Frog virus 3</taxon>
    </lineage>
</organism>
<sequence>MTSAVSFPITSQASDMLSKFYGSDLGSLYGTLAEKYSGGKPELAEKLRDYACKGWFGYSSPILTSVTGSGLPISCFLLYVPDTIEGLVDHTSELRWLSVMGGGVAGHWDDVRGPSAKSCGTIPFLHTVDADMSAYWQGKVRRGSYAAYMSISHPDLIEFITMRTPTGDVNRKNLNLHHGVNITDTFMRCVERGENWDLVDPKSGAVAHTVSARELWERILETRFRTGEPYLNFIDTANRGLHPALKRKGLKIRGSNLCNEIHLPTAADRTAVCCLSSVNLERYDEWRETDLVECLVEMLDNVIQTFVDEAPLKTPHTARAVRSAAGERSIGLGAMGWARYLQKHRIPFDSEEAVRLTGIIFRGIKSAAVRATRALAKERGEAPDLTGYGVRNAHLLAVAPNANSALLLGTSPSVEPEIGAAYVHRTRVGSHQAVNPYLKRDLESLGLDTEEVWDSIVSNKGSVQHIAALPDSLKKVYKTSFEMDQRVIVRQAAERQRHLCQGQSLNLFFPIGADKTNLSDVHRLAWKSGCKGLYYLRTCAGRTGHKIFEAKKNPEKTEECTACQG</sequence>
<protein>
    <recommendedName>
        <fullName>Putative ribonucleoside-diphosphate reductase large subunit</fullName>
        <ecNumber>1.17.4.1</ecNumber>
    </recommendedName>
    <alternativeName>
        <fullName>Ribonucleotide reductase large subunit</fullName>
    </alternativeName>
</protein>
<feature type="chain" id="PRO_0000410591" description="Putative ribonucleoside-diphosphate reductase large subunit">
    <location>
        <begin position="1"/>
        <end position="565"/>
    </location>
</feature>
<feature type="active site" description="Proton acceptor" evidence="1">
    <location>
        <position position="256"/>
    </location>
</feature>
<feature type="active site" description="Cysteine radical intermediate" evidence="1">
    <location>
        <position position="258"/>
    </location>
</feature>
<feature type="active site" description="Proton acceptor" evidence="1">
    <location>
        <position position="260"/>
    </location>
</feature>
<feature type="binding site" evidence="1">
    <location>
        <position position="60"/>
    </location>
    <ligand>
        <name>substrate</name>
    </ligand>
</feature>
<feature type="binding site" evidence="1">
    <location>
        <begin position="74"/>
        <end position="75"/>
    </location>
    <ligand>
        <name>substrate</name>
    </ligand>
</feature>
<feature type="binding site" evidence="1">
    <location>
        <position position="103"/>
    </location>
    <ligand>
        <name>substrate</name>
    </ligand>
</feature>
<feature type="binding site" evidence="1">
    <location>
        <begin position="256"/>
        <end position="260"/>
    </location>
    <ligand>
        <name>substrate</name>
    </ligand>
</feature>
<feature type="binding site" evidence="1">
    <location>
        <begin position="400"/>
        <end position="404"/>
    </location>
    <ligand>
        <name>substrate</name>
    </ligand>
</feature>
<feature type="site" description="Important for hydrogen atom transfer" evidence="1">
    <location>
        <position position="75"/>
    </location>
</feature>
<feature type="site" description="Allosteric effector binding" evidence="1">
    <location>
        <position position="82"/>
    </location>
</feature>
<feature type="site" description="Allosteric effector binding" evidence="1">
    <location>
        <position position="112"/>
    </location>
</feature>
<feature type="site" description="Important for hydrogen atom transfer" evidence="1">
    <location>
        <position position="273"/>
    </location>
</feature>
<feature type="site" description="Important for electron transfer" evidence="1">
    <location>
        <position position="534"/>
    </location>
</feature>
<feature type="site" description="Important for electron transfer" evidence="1">
    <location>
        <position position="535"/>
    </location>
</feature>
<feature type="site" description="Interacts with thioredoxin/glutaredoxin" evidence="1">
    <location>
        <position position="560"/>
    </location>
</feature>
<feature type="site" description="Interacts with thioredoxin/glutaredoxin" evidence="1">
    <location>
        <position position="563"/>
    </location>
</feature>
<feature type="disulfide bond" description="Redox-active" evidence="1">
    <location>
        <begin position="75"/>
        <end position="273"/>
    </location>
</feature>
<evidence type="ECO:0000250" key="1"/>
<evidence type="ECO:0000305" key="2"/>
<proteinExistence type="inferred from homology"/>
<accession>Q6GZT8</accession>
<organismHost>
    <name type="scientific">Dryophytes versicolor</name>
    <name type="common">chameleon treefrog</name>
    <dbReference type="NCBI Taxonomy" id="30343"/>
</organismHost>
<organismHost>
    <name type="scientific">Lithobates pipiens</name>
    <name type="common">Northern leopard frog</name>
    <name type="synonym">Rana pipiens</name>
    <dbReference type="NCBI Taxonomy" id="8404"/>
</organismHost>
<organismHost>
    <name type="scientific">Lithobates sylvaticus</name>
    <name type="common">Wood frog</name>
    <name type="synonym">Rana sylvatica</name>
    <dbReference type="NCBI Taxonomy" id="45438"/>
</organismHost>
<organismHost>
    <name type="scientific">Notophthalmus viridescens</name>
    <name type="common">Eastern newt</name>
    <name type="synonym">Triturus viridescens</name>
    <dbReference type="NCBI Taxonomy" id="8316"/>
</organismHost>
<gene>
    <name type="ORF">FV3-038R</name>
</gene>
<comment type="function">
    <text evidence="1">Ribonucleoside-diphosphate reductase holoenzyme provides the precursors necessary for viral DNA synthesis. Allows virus growth in non-dividing cells. Catalyzes the biosynthesis of deoxyribonucleotides from the corresponding ribonucleotides (By similarity).</text>
</comment>
<comment type="catalytic activity">
    <reaction>
        <text>a 2'-deoxyribonucleoside 5'-diphosphate + [thioredoxin]-disulfide + H2O = a ribonucleoside 5'-diphosphate + [thioredoxin]-dithiol</text>
        <dbReference type="Rhea" id="RHEA:23252"/>
        <dbReference type="Rhea" id="RHEA-COMP:10698"/>
        <dbReference type="Rhea" id="RHEA-COMP:10700"/>
        <dbReference type="ChEBI" id="CHEBI:15377"/>
        <dbReference type="ChEBI" id="CHEBI:29950"/>
        <dbReference type="ChEBI" id="CHEBI:50058"/>
        <dbReference type="ChEBI" id="CHEBI:57930"/>
        <dbReference type="ChEBI" id="CHEBI:73316"/>
        <dbReference type="EC" id="1.17.4.1"/>
    </reaction>
</comment>
<comment type="activity regulation">
    <text evidence="1">Under complex allosteric control mediated by deoxynucleoside triphosphates and ATP binding. The type of nucleotide bound at the specificity site determines substrate preference. It seems probable that ATP makes the enzyme reduce CDP and UDP, dGTP favors ADP reduction and dTTP favors GDP reduction (By similarity).</text>
</comment>
<comment type="subunit">
    <text evidence="1">Heterotetramer composed of a homodimer of the large subunit (R1) and a homodimer of the small subunit (R2). Larger multisubunit protein complex are also active, composed of (R1)n(R2)n (By similarity).</text>
</comment>
<comment type="similarity">
    <text evidence="2">Belongs to the ribonucleoside diphosphate reductase large chain family.</text>
</comment>
<dbReference type="EC" id="1.17.4.1"/>
<dbReference type="EMBL" id="AY548484">
    <property type="protein sequence ID" value="AAT09697.1"/>
    <property type="molecule type" value="Genomic_DNA"/>
</dbReference>
<dbReference type="RefSeq" id="YP_031616.1">
    <property type="nucleotide sequence ID" value="NC_005946.1"/>
</dbReference>
<dbReference type="SMR" id="Q6GZT8"/>
<dbReference type="KEGG" id="vg:2947817"/>
<dbReference type="Proteomes" id="UP000008770">
    <property type="component" value="Segment"/>
</dbReference>
<dbReference type="GO" id="GO:0005524">
    <property type="term" value="F:ATP binding"/>
    <property type="evidence" value="ECO:0007669"/>
    <property type="project" value="TreeGrafter"/>
</dbReference>
<dbReference type="GO" id="GO:0004748">
    <property type="term" value="F:ribonucleoside-diphosphate reductase activity, thioredoxin disulfide as acceptor"/>
    <property type="evidence" value="ECO:0007669"/>
    <property type="project" value="UniProtKB-EC"/>
</dbReference>
<dbReference type="GO" id="GO:0009263">
    <property type="term" value="P:deoxyribonucleotide biosynthetic process"/>
    <property type="evidence" value="ECO:0007669"/>
    <property type="project" value="UniProtKB-KW"/>
</dbReference>
<dbReference type="Gene3D" id="3.20.70.20">
    <property type="match status" value="1"/>
</dbReference>
<dbReference type="InterPro" id="IPR000788">
    <property type="entry name" value="RNR_lg_C"/>
</dbReference>
<dbReference type="InterPro" id="IPR039718">
    <property type="entry name" value="Rrm1"/>
</dbReference>
<dbReference type="NCBIfam" id="NF006577">
    <property type="entry name" value="PRK09102.1"/>
    <property type="match status" value="1"/>
</dbReference>
<dbReference type="PANTHER" id="PTHR11573">
    <property type="entry name" value="RIBONUCLEOSIDE-DIPHOSPHATE REDUCTASE LARGE CHAIN"/>
    <property type="match status" value="1"/>
</dbReference>
<dbReference type="PANTHER" id="PTHR11573:SF6">
    <property type="entry name" value="RIBONUCLEOSIDE-DIPHOSPHATE REDUCTASE LARGE SUBUNIT"/>
    <property type="match status" value="1"/>
</dbReference>
<dbReference type="Pfam" id="PF02867">
    <property type="entry name" value="Ribonuc_red_lgC"/>
    <property type="match status" value="2"/>
</dbReference>
<dbReference type="PRINTS" id="PR01183">
    <property type="entry name" value="RIBORDTASEM1"/>
</dbReference>
<dbReference type="SUPFAM" id="SSF51998">
    <property type="entry name" value="PFL-like glycyl radical enzymes"/>
    <property type="match status" value="1"/>
</dbReference>
<reference key="1">
    <citation type="journal article" date="2004" name="Virology">
        <title>Comparative genomic analyses of frog virus 3, type species of the genus Ranavirus (family Iridoviridae).</title>
        <authorList>
            <person name="Tan W.G."/>
            <person name="Barkman T.J."/>
            <person name="Gregory Chinchar V."/>
            <person name="Essani K."/>
        </authorList>
    </citation>
    <scope>NUCLEOTIDE SEQUENCE [LARGE SCALE GENOMIC DNA]</scope>
</reference>